<keyword id="KW-0378">Hydrolase</keyword>
<keyword id="KW-0464">Manganese</keyword>
<keyword id="KW-0479">Metal-binding</keyword>
<keyword id="KW-0539">Nucleus</keyword>
<keyword id="KW-1185">Reference proteome</keyword>
<keyword id="KW-0677">Repeat</keyword>
<keyword id="KW-0802">TPR repeat</keyword>
<reference key="1">
    <citation type="journal article" date="2002" name="Nature">
        <title>The genome sequence of Schizosaccharomyces pombe.</title>
        <authorList>
            <person name="Wood V."/>
            <person name="Gwilliam R."/>
            <person name="Rajandream M.A."/>
            <person name="Lyne M.H."/>
            <person name="Lyne R."/>
            <person name="Stewart A."/>
            <person name="Sgouros J.G."/>
            <person name="Peat N."/>
            <person name="Hayles J."/>
            <person name="Baker S.G."/>
            <person name="Basham D."/>
            <person name="Bowman S."/>
            <person name="Brooks K."/>
            <person name="Brown D."/>
            <person name="Brown S."/>
            <person name="Chillingworth T."/>
            <person name="Churcher C.M."/>
            <person name="Collins M."/>
            <person name="Connor R."/>
            <person name="Cronin A."/>
            <person name="Davis P."/>
            <person name="Feltwell T."/>
            <person name="Fraser A."/>
            <person name="Gentles S."/>
            <person name="Goble A."/>
            <person name="Hamlin N."/>
            <person name="Harris D.E."/>
            <person name="Hidalgo J."/>
            <person name="Hodgson G."/>
            <person name="Holroyd S."/>
            <person name="Hornsby T."/>
            <person name="Howarth S."/>
            <person name="Huckle E.J."/>
            <person name="Hunt S."/>
            <person name="Jagels K."/>
            <person name="James K.D."/>
            <person name="Jones L."/>
            <person name="Jones M."/>
            <person name="Leather S."/>
            <person name="McDonald S."/>
            <person name="McLean J."/>
            <person name="Mooney P."/>
            <person name="Moule S."/>
            <person name="Mungall K.L."/>
            <person name="Murphy L.D."/>
            <person name="Niblett D."/>
            <person name="Odell C."/>
            <person name="Oliver K."/>
            <person name="O'Neil S."/>
            <person name="Pearson D."/>
            <person name="Quail M.A."/>
            <person name="Rabbinowitsch E."/>
            <person name="Rutherford K.M."/>
            <person name="Rutter S."/>
            <person name="Saunders D."/>
            <person name="Seeger K."/>
            <person name="Sharp S."/>
            <person name="Skelton J."/>
            <person name="Simmonds M.N."/>
            <person name="Squares R."/>
            <person name="Squares S."/>
            <person name="Stevens K."/>
            <person name="Taylor K."/>
            <person name="Taylor R.G."/>
            <person name="Tivey A."/>
            <person name="Walsh S.V."/>
            <person name="Warren T."/>
            <person name="Whitehead S."/>
            <person name="Woodward J.R."/>
            <person name="Volckaert G."/>
            <person name="Aert R."/>
            <person name="Robben J."/>
            <person name="Grymonprez B."/>
            <person name="Weltjens I."/>
            <person name="Vanstreels E."/>
            <person name="Rieger M."/>
            <person name="Schaefer M."/>
            <person name="Mueller-Auer S."/>
            <person name="Gabel C."/>
            <person name="Fuchs M."/>
            <person name="Duesterhoeft A."/>
            <person name="Fritzc C."/>
            <person name="Holzer E."/>
            <person name="Moestl D."/>
            <person name="Hilbert H."/>
            <person name="Borzym K."/>
            <person name="Langer I."/>
            <person name="Beck A."/>
            <person name="Lehrach H."/>
            <person name="Reinhardt R."/>
            <person name="Pohl T.M."/>
            <person name="Eger P."/>
            <person name="Zimmermann W."/>
            <person name="Wedler H."/>
            <person name="Wambutt R."/>
            <person name="Purnelle B."/>
            <person name="Goffeau A."/>
            <person name="Cadieu E."/>
            <person name="Dreano S."/>
            <person name="Gloux S."/>
            <person name="Lelaure V."/>
            <person name="Mottier S."/>
            <person name="Galibert F."/>
            <person name="Aves S.J."/>
            <person name="Xiang Z."/>
            <person name="Hunt C."/>
            <person name="Moore K."/>
            <person name="Hurst S.M."/>
            <person name="Lucas M."/>
            <person name="Rochet M."/>
            <person name="Gaillardin C."/>
            <person name="Tallada V.A."/>
            <person name="Garzon A."/>
            <person name="Thode G."/>
            <person name="Daga R.R."/>
            <person name="Cruzado L."/>
            <person name="Jimenez J."/>
            <person name="Sanchez M."/>
            <person name="del Rey F."/>
            <person name="Benito J."/>
            <person name="Dominguez A."/>
            <person name="Revuelta J.L."/>
            <person name="Moreno S."/>
            <person name="Armstrong J."/>
            <person name="Forsburg S.L."/>
            <person name="Cerutti L."/>
            <person name="Lowe T."/>
            <person name="McCombie W.R."/>
            <person name="Paulsen I."/>
            <person name="Potashkin J."/>
            <person name="Shpakovski G.V."/>
            <person name="Ussery D."/>
            <person name="Barrell B.G."/>
            <person name="Nurse P."/>
        </authorList>
    </citation>
    <scope>NUCLEOTIDE SEQUENCE [LARGE SCALE GENOMIC DNA]</scope>
    <source>
        <strain>972 / ATCC 24843</strain>
    </source>
</reference>
<gene>
    <name type="primary">ppt1</name>
    <name type="ORF">SPBC3F6.01c</name>
</gene>
<dbReference type="EC" id="3.1.3.16" evidence="3"/>
<dbReference type="EMBL" id="CU329671">
    <property type="protein sequence ID" value="CAA17690.2"/>
    <property type="molecule type" value="Genomic_DNA"/>
</dbReference>
<dbReference type="PIR" id="T40391">
    <property type="entry name" value="T40391"/>
</dbReference>
<dbReference type="RefSeq" id="NP_596740.1">
    <property type="nucleotide sequence ID" value="NM_001022666.2"/>
</dbReference>
<dbReference type="SMR" id="O43049"/>
<dbReference type="BioGRID" id="277519">
    <property type="interactions" value="27"/>
</dbReference>
<dbReference type="FunCoup" id="O43049">
    <property type="interactions" value="1061"/>
</dbReference>
<dbReference type="STRING" id="284812.O43049"/>
<dbReference type="iPTMnet" id="O43049"/>
<dbReference type="PaxDb" id="4896-SPBC3F6.01c.1"/>
<dbReference type="EnsemblFungi" id="SPBC3F6.01c.1">
    <property type="protein sequence ID" value="SPBC3F6.01c.1:pep"/>
    <property type="gene ID" value="SPBC3F6.01c"/>
</dbReference>
<dbReference type="KEGG" id="spo:2541004"/>
<dbReference type="PomBase" id="SPBC3F6.01c"/>
<dbReference type="VEuPathDB" id="FungiDB:SPBC3F6.01c"/>
<dbReference type="eggNOG" id="KOG0376">
    <property type="taxonomic scope" value="Eukaryota"/>
</dbReference>
<dbReference type="HOGENOM" id="CLU_004962_5_2_1"/>
<dbReference type="InParanoid" id="O43049"/>
<dbReference type="OMA" id="IHKKYAF"/>
<dbReference type="PhylomeDB" id="O43049"/>
<dbReference type="Reactome" id="R-SPO-5693565">
    <property type="pathway name" value="Recruitment and ATM-mediated phosphorylation of repair and signaling proteins at DNA double strand breaks"/>
</dbReference>
<dbReference type="PRO" id="PR:O43049"/>
<dbReference type="Proteomes" id="UP000002485">
    <property type="component" value="Chromosome II"/>
</dbReference>
<dbReference type="GO" id="GO:0005829">
    <property type="term" value="C:cytosol"/>
    <property type="evidence" value="ECO:0000318"/>
    <property type="project" value="GO_Central"/>
</dbReference>
<dbReference type="GO" id="GO:0005634">
    <property type="term" value="C:nucleus"/>
    <property type="evidence" value="ECO:0000318"/>
    <property type="project" value="GO_Central"/>
</dbReference>
<dbReference type="GO" id="GO:0046872">
    <property type="term" value="F:metal ion binding"/>
    <property type="evidence" value="ECO:0007669"/>
    <property type="project" value="UniProtKB-KW"/>
</dbReference>
<dbReference type="GO" id="GO:0004722">
    <property type="term" value="F:protein serine/threonine phosphatase activity"/>
    <property type="evidence" value="ECO:0000318"/>
    <property type="project" value="GO_Central"/>
</dbReference>
<dbReference type="GO" id="GO:0007165">
    <property type="term" value="P:signal transduction"/>
    <property type="evidence" value="ECO:0000250"/>
    <property type="project" value="PomBase"/>
</dbReference>
<dbReference type="CDD" id="cd07417">
    <property type="entry name" value="MPP_PP5_C"/>
    <property type="match status" value="1"/>
</dbReference>
<dbReference type="FunFam" id="3.60.21.10:FF:000039">
    <property type="entry name" value="Serine/threonine-protein phosphatase"/>
    <property type="match status" value="1"/>
</dbReference>
<dbReference type="Gene3D" id="3.60.21.10">
    <property type="match status" value="1"/>
</dbReference>
<dbReference type="Gene3D" id="1.25.40.10">
    <property type="entry name" value="Tetratricopeptide repeat domain"/>
    <property type="match status" value="1"/>
</dbReference>
<dbReference type="InterPro" id="IPR004843">
    <property type="entry name" value="Calcineurin-like_PHP_ApaH"/>
</dbReference>
<dbReference type="InterPro" id="IPR029052">
    <property type="entry name" value="Metallo-depent_PP-like"/>
</dbReference>
<dbReference type="InterPro" id="IPR041753">
    <property type="entry name" value="PP5_C"/>
</dbReference>
<dbReference type="InterPro" id="IPR013235">
    <property type="entry name" value="PPP_dom"/>
</dbReference>
<dbReference type="InterPro" id="IPR051134">
    <property type="entry name" value="PPP_phosphatase"/>
</dbReference>
<dbReference type="InterPro" id="IPR006186">
    <property type="entry name" value="Ser/Thr-sp_prot-phosphatase"/>
</dbReference>
<dbReference type="InterPro" id="IPR011990">
    <property type="entry name" value="TPR-like_helical_dom_sf"/>
</dbReference>
<dbReference type="InterPro" id="IPR019734">
    <property type="entry name" value="TPR_rpt"/>
</dbReference>
<dbReference type="PANTHER" id="PTHR45668">
    <property type="entry name" value="SERINE/THREONINE-PROTEIN PHOSPHATASE 5-RELATED"/>
    <property type="match status" value="1"/>
</dbReference>
<dbReference type="PANTHER" id="PTHR45668:SF5">
    <property type="entry name" value="SERINE_THREONINE-PROTEIN PHOSPHATASE 5"/>
    <property type="match status" value="1"/>
</dbReference>
<dbReference type="Pfam" id="PF00149">
    <property type="entry name" value="Metallophos"/>
    <property type="match status" value="1"/>
</dbReference>
<dbReference type="Pfam" id="PF08321">
    <property type="entry name" value="PPP5"/>
    <property type="match status" value="1"/>
</dbReference>
<dbReference type="Pfam" id="PF13181">
    <property type="entry name" value="TPR_8"/>
    <property type="match status" value="1"/>
</dbReference>
<dbReference type="PIRSF" id="PIRSF033096">
    <property type="entry name" value="PPPtase_5"/>
    <property type="match status" value="1"/>
</dbReference>
<dbReference type="PRINTS" id="PR00114">
    <property type="entry name" value="STPHPHTASE"/>
</dbReference>
<dbReference type="SMART" id="SM00156">
    <property type="entry name" value="PP2Ac"/>
    <property type="match status" value="1"/>
</dbReference>
<dbReference type="SMART" id="SM00028">
    <property type="entry name" value="TPR"/>
    <property type="match status" value="3"/>
</dbReference>
<dbReference type="SUPFAM" id="SSF56300">
    <property type="entry name" value="Metallo-dependent phosphatases"/>
    <property type="match status" value="1"/>
</dbReference>
<dbReference type="SUPFAM" id="SSF48452">
    <property type="entry name" value="TPR-like"/>
    <property type="match status" value="1"/>
</dbReference>
<dbReference type="PROSITE" id="PS00125">
    <property type="entry name" value="SER_THR_PHOSPHATASE"/>
    <property type="match status" value="1"/>
</dbReference>
<dbReference type="PROSITE" id="PS50005">
    <property type="entry name" value="TPR"/>
    <property type="match status" value="3"/>
</dbReference>
<dbReference type="PROSITE" id="PS50293">
    <property type="entry name" value="TPR_REGION"/>
    <property type="match status" value="1"/>
</dbReference>
<sequence length="473" mass="53291">MAKEALELKNEANKFLKEGHIVQAIDLYTKAIELDSTNAILYSNRSLAHLKSEDYGLAINDASKAIECDPEYAKAYFRRATAHIAIFQPKEAVGDFRKALALAPSDPAARKKLRECEQLVKRIRFQEAIHNTEPPSPLANINIEDMDIPSDYDGVILEKQITKEFVEDMKERFCQGKKLPLKFAYSILRDLKELLEKTPSLIDIPVKGDETLVICGDTHGQYFDLLNIFKLHGPPSPTNKYLFNGDFVDRGSWSTEVAFTLYAYKLLYPDAVFINRGNHETDDMNKVYGFEGECRSKYNERTFNIFSETFSLLPLGSLISDSYLVVHGGLFSDDNVTLDQLRNIDRFSKKQPGQSGLMMEMLWTDPQPAPGRGPSKRGVGLQFGPDVSKRFCEANGLKAVIRSHEVRDQGYEVEHDGYCITVFSAPNYCDSTGNLGAVIKVKEDMELDFHQFEAVPHPNIRPMAYANGLLSGM</sequence>
<proteinExistence type="inferred from homology"/>
<name>PPP5_SCHPO</name>
<accession>O43049</accession>
<protein>
    <recommendedName>
        <fullName>Serine/threonine-protein phosphatase T</fullName>
        <shortName>PPT</shortName>
        <ecNumber evidence="3">3.1.3.16</ecNumber>
    </recommendedName>
</protein>
<evidence type="ECO:0000250" key="1"/>
<evidence type="ECO:0000250" key="2">
    <source>
        <dbReference type="UniProtKB" id="P53041"/>
    </source>
</evidence>
<evidence type="ECO:0000250" key="3">
    <source>
        <dbReference type="UniProtKB" id="P53043"/>
    </source>
</evidence>
<evidence type="ECO:0000305" key="4"/>
<organism>
    <name type="scientific">Schizosaccharomyces pombe (strain 972 / ATCC 24843)</name>
    <name type="common">Fission yeast</name>
    <dbReference type="NCBI Taxonomy" id="284812"/>
    <lineage>
        <taxon>Eukaryota</taxon>
        <taxon>Fungi</taxon>
        <taxon>Dikarya</taxon>
        <taxon>Ascomycota</taxon>
        <taxon>Taphrinomycotina</taxon>
        <taxon>Schizosaccharomycetes</taxon>
        <taxon>Schizosaccharomycetales</taxon>
        <taxon>Schizosaccharomycetaceae</taxon>
        <taxon>Schizosaccharomyces</taxon>
    </lineage>
</organism>
<feature type="chain" id="PRO_0000363378" description="Serine/threonine-protein phosphatase T">
    <location>
        <begin position="1"/>
        <end position="473"/>
    </location>
</feature>
<feature type="repeat" description="TPR 1">
    <location>
        <begin position="5"/>
        <end position="38"/>
    </location>
</feature>
<feature type="repeat" description="TPR 2">
    <location>
        <begin position="40"/>
        <end position="72"/>
    </location>
</feature>
<feature type="repeat" description="TPR 3">
    <location>
        <begin position="73"/>
        <end position="106"/>
    </location>
</feature>
<feature type="region of interest" description="Catalytic" evidence="1">
    <location>
        <begin position="159"/>
        <end position="472"/>
    </location>
</feature>
<feature type="active site" description="Proton donor/acceptor" evidence="2">
    <location>
        <position position="279"/>
    </location>
</feature>
<feature type="binding site" evidence="2">
    <location>
        <position position="217"/>
    </location>
    <ligand>
        <name>Mn(2+)</name>
        <dbReference type="ChEBI" id="CHEBI:29035"/>
        <label>1</label>
    </ligand>
</feature>
<feature type="binding site" evidence="2">
    <location>
        <position position="219"/>
    </location>
    <ligand>
        <name>Mn(2+)</name>
        <dbReference type="ChEBI" id="CHEBI:29035"/>
        <label>1</label>
    </ligand>
</feature>
<feature type="binding site" evidence="2">
    <location>
        <position position="246"/>
    </location>
    <ligand>
        <name>Mn(2+)</name>
        <dbReference type="ChEBI" id="CHEBI:29035"/>
        <label>1</label>
    </ligand>
</feature>
<feature type="binding site" evidence="2">
    <location>
        <position position="246"/>
    </location>
    <ligand>
        <name>Mn(2+)</name>
        <dbReference type="ChEBI" id="CHEBI:29035"/>
        <label>2</label>
    </ligand>
</feature>
<feature type="binding site" evidence="2">
    <location>
        <position position="278"/>
    </location>
    <ligand>
        <name>Mn(2+)</name>
        <dbReference type="ChEBI" id="CHEBI:29035"/>
        <label>2</label>
    </ligand>
</feature>
<feature type="binding site" evidence="2">
    <location>
        <position position="327"/>
    </location>
    <ligand>
        <name>Mn(2+)</name>
        <dbReference type="ChEBI" id="CHEBI:29035"/>
        <label>2</label>
    </ligand>
</feature>
<feature type="binding site" evidence="2">
    <location>
        <position position="404"/>
    </location>
    <ligand>
        <name>Mn(2+)</name>
        <dbReference type="ChEBI" id="CHEBI:29035"/>
        <label>2</label>
    </ligand>
</feature>
<comment type="function">
    <text evidence="3">Protein phosphatase that specifically binds to and dephosphorylates the molecular chaperone Hsp90. Dephosphorylation positively regulates the Hsp90 chaperone machinery (By similarity).</text>
</comment>
<comment type="catalytic activity">
    <reaction evidence="3">
        <text>O-phospho-L-seryl-[protein] + H2O = L-seryl-[protein] + phosphate</text>
        <dbReference type="Rhea" id="RHEA:20629"/>
        <dbReference type="Rhea" id="RHEA-COMP:9863"/>
        <dbReference type="Rhea" id="RHEA-COMP:11604"/>
        <dbReference type="ChEBI" id="CHEBI:15377"/>
        <dbReference type="ChEBI" id="CHEBI:29999"/>
        <dbReference type="ChEBI" id="CHEBI:43474"/>
        <dbReference type="ChEBI" id="CHEBI:83421"/>
        <dbReference type="EC" id="3.1.3.16"/>
    </reaction>
    <physiologicalReaction direction="left-to-right" evidence="3">
        <dbReference type="Rhea" id="RHEA:20630"/>
    </physiologicalReaction>
</comment>
<comment type="catalytic activity">
    <reaction evidence="3">
        <text>O-phospho-L-threonyl-[protein] + H2O = L-threonyl-[protein] + phosphate</text>
        <dbReference type="Rhea" id="RHEA:47004"/>
        <dbReference type="Rhea" id="RHEA-COMP:11060"/>
        <dbReference type="Rhea" id="RHEA-COMP:11605"/>
        <dbReference type="ChEBI" id="CHEBI:15377"/>
        <dbReference type="ChEBI" id="CHEBI:30013"/>
        <dbReference type="ChEBI" id="CHEBI:43474"/>
        <dbReference type="ChEBI" id="CHEBI:61977"/>
        <dbReference type="EC" id="3.1.3.16"/>
    </reaction>
    <physiologicalReaction direction="left-to-right" evidence="3">
        <dbReference type="Rhea" id="RHEA:47005"/>
    </physiologicalReaction>
</comment>
<comment type="cofactor">
    <cofactor evidence="2">
        <name>Mg(2+)</name>
        <dbReference type="ChEBI" id="CHEBI:18420"/>
    </cofactor>
    <cofactor evidence="2">
        <name>Mn(2+)</name>
        <dbReference type="ChEBI" id="CHEBI:29035"/>
    </cofactor>
    <text evidence="2">Binds 2 Mg(2+) or Mn(2+) cations per subunit.</text>
</comment>
<comment type="subcellular location">
    <subcellularLocation>
        <location evidence="2">Nucleus</location>
    </subcellularLocation>
</comment>
<comment type="domain">
    <text evidence="2">The TPR repeats mediate protein-protein interactions with substrate proteins, but also autoinhibit PPT1 phosphatase activity.</text>
</comment>
<comment type="domain">
    <text evidence="2">The TPR repeats mediate protein-protein interactions with substrate proteins, but also autoinhibit PPT phosphatase activity.</text>
</comment>
<comment type="similarity">
    <text evidence="4">Belongs to the PPP phosphatase family. PP-5 (PP-T) subfamily.</text>
</comment>